<evidence type="ECO:0000250" key="1">
    <source>
        <dbReference type="UniProtKB" id="P48730"/>
    </source>
</evidence>
<evidence type="ECO:0000255" key="2">
    <source>
        <dbReference type="PROSITE-ProRule" id="PRU00159"/>
    </source>
</evidence>
<evidence type="ECO:0000256" key="3">
    <source>
        <dbReference type="SAM" id="MobiDB-lite"/>
    </source>
</evidence>
<evidence type="ECO:0000269" key="4">
    <source>
    </source>
</evidence>
<evidence type="ECO:0000269" key="5">
    <source>
    </source>
</evidence>
<evidence type="ECO:0000303" key="6">
    <source>
    </source>
</evidence>
<evidence type="ECO:0000303" key="7">
    <source>
    </source>
</evidence>
<evidence type="ECO:0000305" key="8"/>
<evidence type="ECO:0000312" key="9">
    <source>
        <dbReference type="Araport" id="AT1G03930"/>
    </source>
</evidence>
<evidence type="ECO:0000312" key="10">
    <source>
        <dbReference type="EMBL" id="AAD10678.1"/>
    </source>
</evidence>
<reference key="1">
    <citation type="journal article" date="1994" name="J. Biol. Chem.">
        <title>Cloning and biochemical characterization of a plant protein kinase that phosphorylates serine, threonine, and tyrosine.</title>
        <authorList>
            <person name="Ali N."/>
            <person name="Halfter U."/>
            <person name="Chua N.H."/>
        </authorList>
    </citation>
    <scope>NUCLEOTIDE SEQUENCE [MRNA]</scope>
    <scope>FUNCTION</scope>
    <scope>CATALYTIC ACTIVITY</scope>
    <scope>TISSUE SPECIFICITY</scope>
    <scope>PHOSPHORYLATION</scope>
</reference>
<reference key="2">
    <citation type="journal article" date="2005" name="Plant Cell">
        <title>Plasmodesmal-associated protein kinase in tobacco and Arabidopsis recognizes a subset of non-cell-autonomous proteins.</title>
        <authorList>
            <person name="Lee J.-Y."/>
            <person name="Taoka K."/>
            <person name="Yoo B.-C."/>
            <person name="Ben-Nissan G."/>
            <person name="Kim D.-J."/>
            <person name="Lucas W.J."/>
        </authorList>
    </citation>
    <scope>NUCLEOTIDE SEQUENCE [MRNA]</scope>
    <scope>SUBCELLULAR LOCATION</scope>
</reference>
<reference key="3">
    <citation type="journal article" date="2000" name="Nature">
        <title>Sequence and analysis of chromosome 1 of the plant Arabidopsis thaliana.</title>
        <authorList>
            <person name="Theologis A."/>
            <person name="Ecker J.R."/>
            <person name="Palm C.J."/>
            <person name="Federspiel N.A."/>
            <person name="Kaul S."/>
            <person name="White O."/>
            <person name="Alonso J."/>
            <person name="Altafi H."/>
            <person name="Araujo R."/>
            <person name="Bowman C.L."/>
            <person name="Brooks S.Y."/>
            <person name="Buehler E."/>
            <person name="Chan A."/>
            <person name="Chao Q."/>
            <person name="Chen H."/>
            <person name="Cheuk R.F."/>
            <person name="Chin C.W."/>
            <person name="Chung M.K."/>
            <person name="Conn L."/>
            <person name="Conway A.B."/>
            <person name="Conway A.R."/>
            <person name="Creasy T.H."/>
            <person name="Dewar K."/>
            <person name="Dunn P."/>
            <person name="Etgu P."/>
            <person name="Feldblyum T.V."/>
            <person name="Feng J.-D."/>
            <person name="Fong B."/>
            <person name="Fujii C.Y."/>
            <person name="Gill J.E."/>
            <person name="Goldsmith A.D."/>
            <person name="Haas B."/>
            <person name="Hansen N.F."/>
            <person name="Hughes B."/>
            <person name="Huizar L."/>
            <person name="Hunter J.L."/>
            <person name="Jenkins J."/>
            <person name="Johnson-Hopson C."/>
            <person name="Khan S."/>
            <person name="Khaykin E."/>
            <person name="Kim C.J."/>
            <person name="Koo H.L."/>
            <person name="Kremenetskaia I."/>
            <person name="Kurtz D.B."/>
            <person name="Kwan A."/>
            <person name="Lam B."/>
            <person name="Langin-Hooper S."/>
            <person name="Lee A."/>
            <person name="Lee J.M."/>
            <person name="Lenz C.A."/>
            <person name="Li J.H."/>
            <person name="Li Y.-P."/>
            <person name="Lin X."/>
            <person name="Liu S.X."/>
            <person name="Liu Z.A."/>
            <person name="Luros J.S."/>
            <person name="Maiti R."/>
            <person name="Marziali A."/>
            <person name="Militscher J."/>
            <person name="Miranda M."/>
            <person name="Nguyen M."/>
            <person name="Nierman W.C."/>
            <person name="Osborne B.I."/>
            <person name="Pai G."/>
            <person name="Peterson J."/>
            <person name="Pham P.K."/>
            <person name="Rizzo M."/>
            <person name="Rooney T."/>
            <person name="Rowley D."/>
            <person name="Sakano H."/>
            <person name="Salzberg S.L."/>
            <person name="Schwartz J.R."/>
            <person name="Shinn P."/>
            <person name="Southwick A.M."/>
            <person name="Sun H."/>
            <person name="Tallon L.J."/>
            <person name="Tambunga G."/>
            <person name="Toriumi M.J."/>
            <person name="Town C.D."/>
            <person name="Utterback T."/>
            <person name="Van Aken S."/>
            <person name="Vaysberg M."/>
            <person name="Vysotskaia V.S."/>
            <person name="Walker M."/>
            <person name="Wu D."/>
            <person name="Yu G."/>
            <person name="Fraser C.M."/>
            <person name="Venter J.C."/>
            <person name="Davis R.W."/>
        </authorList>
    </citation>
    <scope>NUCLEOTIDE SEQUENCE [LARGE SCALE GENOMIC DNA]</scope>
    <source>
        <strain>cv. Columbia</strain>
    </source>
</reference>
<reference key="4">
    <citation type="journal article" date="2017" name="Plant J.">
        <title>Araport11: a complete reannotation of the Arabidopsis thaliana reference genome.</title>
        <authorList>
            <person name="Cheng C.Y."/>
            <person name="Krishnakumar V."/>
            <person name="Chan A.P."/>
            <person name="Thibaud-Nissen F."/>
            <person name="Schobel S."/>
            <person name="Town C.D."/>
        </authorList>
    </citation>
    <scope>GENOME REANNOTATION</scope>
    <source>
        <strain>cv. Columbia</strain>
    </source>
</reference>
<reference key="5">
    <citation type="journal article" date="2003" name="Science">
        <title>Empirical analysis of transcriptional activity in the Arabidopsis genome.</title>
        <authorList>
            <person name="Yamada K."/>
            <person name="Lim J."/>
            <person name="Dale J.M."/>
            <person name="Chen H."/>
            <person name="Shinn P."/>
            <person name="Palm C.J."/>
            <person name="Southwick A.M."/>
            <person name="Wu H.C."/>
            <person name="Kim C.J."/>
            <person name="Nguyen M."/>
            <person name="Pham P.K."/>
            <person name="Cheuk R.F."/>
            <person name="Karlin-Newmann G."/>
            <person name="Liu S.X."/>
            <person name="Lam B."/>
            <person name="Sakano H."/>
            <person name="Wu T."/>
            <person name="Yu G."/>
            <person name="Miranda M."/>
            <person name="Quach H.L."/>
            <person name="Tripp M."/>
            <person name="Chang C.H."/>
            <person name="Lee J.M."/>
            <person name="Toriumi M.J."/>
            <person name="Chan M.M."/>
            <person name="Tang C.C."/>
            <person name="Onodera C.S."/>
            <person name="Deng J.M."/>
            <person name="Akiyama K."/>
            <person name="Ansari Y."/>
            <person name="Arakawa T."/>
            <person name="Banh J."/>
            <person name="Banno F."/>
            <person name="Bowser L."/>
            <person name="Brooks S.Y."/>
            <person name="Carninci P."/>
            <person name="Chao Q."/>
            <person name="Choy N."/>
            <person name="Enju A."/>
            <person name="Goldsmith A.D."/>
            <person name="Gurjal M."/>
            <person name="Hansen N.F."/>
            <person name="Hayashizaki Y."/>
            <person name="Johnson-Hopson C."/>
            <person name="Hsuan V.W."/>
            <person name="Iida K."/>
            <person name="Karnes M."/>
            <person name="Khan S."/>
            <person name="Koesema E."/>
            <person name="Ishida J."/>
            <person name="Jiang P.X."/>
            <person name="Jones T."/>
            <person name="Kawai J."/>
            <person name="Kamiya A."/>
            <person name="Meyers C."/>
            <person name="Nakajima M."/>
            <person name="Narusaka M."/>
            <person name="Seki M."/>
            <person name="Sakurai T."/>
            <person name="Satou M."/>
            <person name="Tamse R."/>
            <person name="Vaysberg M."/>
            <person name="Wallender E.K."/>
            <person name="Wong C."/>
            <person name="Yamamura Y."/>
            <person name="Yuan S."/>
            <person name="Shinozaki K."/>
            <person name="Davis R.W."/>
            <person name="Theologis A."/>
            <person name="Ecker J.R."/>
        </authorList>
    </citation>
    <scope>NUCLEOTIDE SEQUENCE [LARGE SCALE MRNA]</scope>
    <source>
        <strain>cv. Columbia</strain>
    </source>
</reference>
<gene>
    <name evidence="8" type="primary">CKL9</name>
    <name evidence="7" type="synonym">ADK1</name>
    <name evidence="8" type="synonym">CKI4</name>
    <name evidence="8" type="synonym">CKI5</name>
    <name evidence="6" type="synonym">CKL9ALPHA</name>
    <name evidence="6" type="synonym">CKL9BETA</name>
    <name evidence="9" type="ordered locus">At1g03930</name>
    <name evidence="10" type="ORF">F21M11.14</name>
</gene>
<dbReference type="EC" id="2.7.11.1" evidence="5"/>
<dbReference type="EMBL" id="U48779">
    <property type="protein sequence ID" value="AAB47968.1"/>
    <property type="status" value="ALT_SEQ"/>
    <property type="molecule type" value="mRNA"/>
</dbReference>
<dbReference type="EMBL" id="AY943847">
    <property type="protein sequence ID" value="AAY24537.1"/>
    <property type="status" value="ALT_SEQ"/>
    <property type="molecule type" value="mRNA"/>
</dbReference>
<dbReference type="EMBL" id="AY943848">
    <property type="protein sequence ID" value="AAY24538.1"/>
    <property type="molecule type" value="mRNA"/>
</dbReference>
<dbReference type="EMBL" id="AC003027">
    <property type="protein sequence ID" value="AAD10678.1"/>
    <property type="molecule type" value="Genomic_DNA"/>
</dbReference>
<dbReference type="EMBL" id="CP002684">
    <property type="protein sequence ID" value="AEE27635.1"/>
    <property type="molecule type" value="Genomic_DNA"/>
</dbReference>
<dbReference type="EMBL" id="AY065409">
    <property type="protein sequence ID" value="AAL38850.1"/>
    <property type="molecule type" value="mRNA"/>
</dbReference>
<dbReference type="EMBL" id="AY075642">
    <property type="protein sequence ID" value="AAL77651.1"/>
    <property type="molecule type" value="mRNA"/>
</dbReference>
<dbReference type="EMBL" id="AY096519">
    <property type="protein sequence ID" value="AAM20169.1"/>
    <property type="molecule type" value="mRNA"/>
</dbReference>
<dbReference type="EMBL" id="AY101520">
    <property type="protein sequence ID" value="AAM26641.1"/>
    <property type="molecule type" value="mRNA"/>
</dbReference>
<dbReference type="PIR" id="B86170">
    <property type="entry name" value="B86170"/>
</dbReference>
<dbReference type="RefSeq" id="NP_563695.2">
    <property type="nucleotide sequence ID" value="NM_100274.3"/>
</dbReference>
<dbReference type="SMR" id="Q9ZWB3"/>
<dbReference type="FunCoup" id="Q9ZWB3">
    <property type="interactions" value="3832"/>
</dbReference>
<dbReference type="STRING" id="3702.Q9ZWB3"/>
<dbReference type="iPTMnet" id="Q9ZWB3"/>
<dbReference type="PaxDb" id="3702-AT1G03930.1"/>
<dbReference type="ProteomicsDB" id="246875"/>
<dbReference type="EnsemblPlants" id="AT1G03930.1">
    <property type="protein sequence ID" value="AT1G03930.1"/>
    <property type="gene ID" value="AT1G03930"/>
</dbReference>
<dbReference type="GeneID" id="839368"/>
<dbReference type="Gramene" id="AT1G03930.1">
    <property type="protein sequence ID" value="AT1G03930.1"/>
    <property type="gene ID" value="AT1G03930"/>
</dbReference>
<dbReference type="KEGG" id="ath:AT1G03930"/>
<dbReference type="Araport" id="AT1G03930"/>
<dbReference type="TAIR" id="AT1G03930">
    <property type="gene designation" value="ADK1"/>
</dbReference>
<dbReference type="eggNOG" id="KOG1164">
    <property type="taxonomic scope" value="Eukaryota"/>
</dbReference>
<dbReference type="HOGENOM" id="CLU_019279_0_2_1"/>
<dbReference type="InParanoid" id="Q9ZWB3"/>
<dbReference type="OMA" id="ANPRTHQ"/>
<dbReference type="PhylomeDB" id="Q9ZWB3"/>
<dbReference type="PRO" id="PR:Q9ZWB3"/>
<dbReference type="Proteomes" id="UP000006548">
    <property type="component" value="Chromosome 1"/>
</dbReference>
<dbReference type="ExpressionAtlas" id="Q9ZWB3">
    <property type="expression patterns" value="baseline and differential"/>
</dbReference>
<dbReference type="GO" id="GO:0005737">
    <property type="term" value="C:cytoplasm"/>
    <property type="evidence" value="ECO:0000314"/>
    <property type="project" value="TAIR"/>
</dbReference>
<dbReference type="GO" id="GO:0005634">
    <property type="term" value="C:nucleus"/>
    <property type="evidence" value="ECO:0000314"/>
    <property type="project" value="TAIR"/>
</dbReference>
<dbReference type="GO" id="GO:0005524">
    <property type="term" value="F:ATP binding"/>
    <property type="evidence" value="ECO:0007669"/>
    <property type="project" value="UniProtKB-KW"/>
</dbReference>
<dbReference type="GO" id="GO:0106310">
    <property type="term" value="F:protein serine kinase activity"/>
    <property type="evidence" value="ECO:0007669"/>
    <property type="project" value="RHEA"/>
</dbReference>
<dbReference type="GO" id="GO:0004674">
    <property type="term" value="F:protein serine/threonine kinase activity"/>
    <property type="evidence" value="ECO:0007669"/>
    <property type="project" value="UniProtKB-KW"/>
</dbReference>
<dbReference type="GO" id="GO:0004712">
    <property type="term" value="F:protein serine/threonine/tyrosine kinase activity"/>
    <property type="evidence" value="ECO:0000314"/>
    <property type="project" value="TAIR"/>
</dbReference>
<dbReference type="GO" id="GO:0007165">
    <property type="term" value="P:signal transduction"/>
    <property type="evidence" value="ECO:0000304"/>
    <property type="project" value="TAIR"/>
</dbReference>
<dbReference type="CDD" id="cd14125">
    <property type="entry name" value="STKc_CK1_delta_epsilon"/>
    <property type="match status" value="1"/>
</dbReference>
<dbReference type="FunFam" id="1.10.510.10:FF:000164">
    <property type="entry name" value="Casein kinase 1-like protein"/>
    <property type="match status" value="1"/>
</dbReference>
<dbReference type="FunFam" id="3.30.200.20:FF:000538">
    <property type="entry name" value="Putative Casein kinase I"/>
    <property type="match status" value="1"/>
</dbReference>
<dbReference type="Gene3D" id="1.10.510.10">
    <property type="entry name" value="Transferase(Phosphotransferase) domain 1"/>
    <property type="match status" value="1"/>
</dbReference>
<dbReference type="InterPro" id="IPR050235">
    <property type="entry name" value="CK1_Ser-Thr_kinase"/>
</dbReference>
<dbReference type="InterPro" id="IPR011009">
    <property type="entry name" value="Kinase-like_dom_sf"/>
</dbReference>
<dbReference type="InterPro" id="IPR000719">
    <property type="entry name" value="Prot_kinase_dom"/>
</dbReference>
<dbReference type="InterPro" id="IPR017441">
    <property type="entry name" value="Protein_kinase_ATP_BS"/>
</dbReference>
<dbReference type="InterPro" id="IPR008271">
    <property type="entry name" value="Ser/Thr_kinase_AS"/>
</dbReference>
<dbReference type="PANTHER" id="PTHR11909">
    <property type="entry name" value="CASEIN KINASE-RELATED"/>
    <property type="match status" value="1"/>
</dbReference>
<dbReference type="Pfam" id="PF00069">
    <property type="entry name" value="Pkinase"/>
    <property type="match status" value="1"/>
</dbReference>
<dbReference type="SMART" id="SM00220">
    <property type="entry name" value="S_TKc"/>
    <property type="match status" value="1"/>
</dbReference>
<dbReference type="SUPFAM" id="SSF56112">
    <property type="entry name" value="Protein kinase-like (PK-like)"/>
    <property type="match status" value="1"/>
</dbReference>
<dbReference type="PROSITE" id="PS00107">
    <property type="entry name" value="PROTEIN_KINASE_ATP"/>
    <property type="match status" value="1"/>
</dbReference>
<dbReference type="PROSITE" id="PS50011">
    <property type="entry name" value="PROTEIN_KINASE_DOM"/>
    <property type="match status" value="1"/>
</dbReference>
<dbReference type="PROSITE" id="PS00108">
    <property type="entry name" value="PROTEIN_KINASE_ST"/>
    <property type="match status" value="1"/>
</dbReference>
<feature type="chain" id="PRO_0000437148" description="Casein kinase 1-like protein 9">
    <location>
        <begin position="1"/>
        <end position="471"/>
    </location>
</feature>
<feature type="domain" description="Protein kinase" evidence="2">
    <location>
        <begin position="9"/>
        <end position="278"/>
    </location>
</feature>
<feature type="region of interest" description="Disordered" evidence="3">
    <location>
        <begin position="300"/>
        <end position="471"/>
    </location>
</feature>
<feature type="compositionally biased region" description="Basic and acidic residues" evidence="3">
    <location>
        <begin position="325"/>
        <end position="339"/>
    </location>
</feature>
<feature type="compositionally biased region" description="Low complexity" evidence="3">
    <location>
        <begin position="385"/>
        <end position="430"/>
    </location>
</feature>
<feature type="compositionally biased region" description="Polar residues" evidence="3">
    <location>
        <begin position="431"/>
        <end position="449"/>
    </location>
</feature>
<feature type="compositionally biased region" description="Basic and acidic residues" evidence="3">
    <location>
        <begin position="454"/>
        <end position="464"/>
    </location>
</feature>
<feature type="active site" description="Proton acceptor" evidence="2">
    <location>
        <position position="128"/>
    </location>
</feature>
<feature type="binding site" evidence="2">
    <location>
        <begin position="15"/>
        <end position="23"/>
    </location>
    <ligand>
        <name>ATP</name>
        <dbReference type="ChEBI" id="CHEBI:30616"/>
    </ligand>
</feature>
<feature type="binding site" evidence="2">
    <location>
        <position position="38"/>
    </location>
    <ligand>
        <name>ATP</name>
        <dbReference type="ChEBI" id="CHEBI:30616"/>
    </ligand>
</feature>
<organism>
    <name type="scientific">Arabidopsis thaliana</name>
    <name type="common">Mouse-ear cress</name>
    <dbReference type="NCBI Taxonomy" id="3702"/>
    <lineage>
        <taxon>Eukaryota</taxon>
        <taxon>Viridiplantae</taxon>
        <taxon>Streptophyta</taxon>
        <taxon>Embryophyta</taxon>
        <taxon>Tracheophyta</taxon>
        <taxon>Spermatophyta</taxon>
        <taxon>Magnoliopsida</taxon>
        <taxon>eudicotyledons</taxon>
        <taxon>Gunneridae</taxon>
        <taxon>Pentapetalae</taxon>
        <taxon>rosids</taxon>
        <taxon>malvids</taxon>
        <taxon>Brassicales</taxon>
        <taxon>Brassicaceae</taxon>
        <taxon>Camelineae</taxon>
        <taxon>Arabidopsis</taxon>
    </lineage>
</organism>
<accession>Q9ZWB3</accession>
<accession>Q38926</accession>
<sequence length="471" mass="53002">MDLVIGGKFKLGRKIGSGSFGELYLGINVQTGEEVAVKLESVKTKHPQLHYESKLYMLLQGGTGVPNLKWYGVEGDYNVMVIDLLGPSLEDLFNYCNRKLSLKTVLMLADQLINRVEFMHTRGFLHRDIKPDNFLMGLGRKANQVYIIDFGLGKKYRDLQTHRHIPYRENKNLTGTARYASVNTHLGVEQSRRDDLEALGYVLMYFLKGSLPWQGLKAGTKKQKYDRISEKKVATPIEVLCKNQPSEFVSYFRYCRSLRFDDKPDYSYLKRLFRDLFIREGYQFDYVFDWTVLKYPQIGSSSGSSSRTRNHTTANPGLTAGASLEKQERIAGKETRENRFSGAVEAFSRRHPATSTTRDRSASRNSVDGPLSKHPPGDSERPRSSSRYGSSSRRAIPSSSRPSSAGGPSDSRSSSRLVTSTGGVGTVSNRASTSQRIQAGNESRTSSFSRAARNTREDPLRRSLELLTLRK</sequence>
<comment type="function">
    <text evidence="5">Casein kinases are operationally defined by their preferential utilization of acidic proteins such as caseins as substrates. Can phosphorylate casein on serine and threonine residues, and poly(Glu,Tyr) in vitro.</text>
</comment>
<comment type="catalytic activity">
    <reaction evidence="5">
        <text>L-seryl-[protein] + ATP = O-phospho-L-seryl-[protein] + ADP + H(+)</text>
        <dbReference type="Rhea" id="RHEA:17989"/>
        <dbReference type="Rhea" id="RHEA-COMP:9863"/>
        <dbReference type="Rhea" id="RHEA-COMP:11604"/>
        <dbReference type="ChEBI" id="CHEBI:15378"/>
        <dbReference type="ChEBI" id="CHEBI:29999"/>
        <dbReference type="ChEBI" id="CHEBI:30616"/>
        <dbReference type="ChEBI" id="CHEBI:83421"/>
        <dbReference type="ChEBI" id="CHEBI:456216"/>
        <dbReference type="EC" id="2.7.11.1"/>
    </reaction>
</comment>
<comment type="catalytic activity">
    <reaction evidence="5">
        <text>L-threonyl-[protein] + ATP = O-phospho-L-threonyl-[protein] + ADP + H(+)</text>
        <dbReference type="Rhea" id="RHEA:46608"/>
        <dbReference type="Rhea" id="RHEA-COMP:11060"/>
        <dbReference type="Rhea" id="RHEA-COMP:11605"/>
        <dbReference type="ChEBI" id="CHEBI:15378"/>
        <dbReference type="ChEBI" id="CHEBI:30013"/>
        <dbReference type="ChEBI" id="CHEBI:30616"/>
        <dbReference type="ChEBI" id="CHEBI:61977"/>
        <dbReference type="ChEBI" id="CHEBI:456216"/>
        <dbReference type="EC" id="2.7.11.1"/>
    </reaction>
</comment>
<comment type="subunit">
    <text evidence="1">Monomer.</text>
</comment>
<comment type="subcellular location">
    <subcellularLocation>
        <location evidence="4">Cytoplasm</location>
    </subcellularLocation>
    <subcellularLocation>
        <location evidence="4">Nucleus</location>
    </subcellularLocation>
</comment>
<comment type="tissue specificity">
    <text evidence="5">Expressed in leaves, stems and flowers.</text>
</comment>
<comment type="PTM">
    <text evidence="5">Autophosphorylated on serine, threonine and tyrosine residues.</text>
</comment>
<comment type="similarity">
    <text evidence="8">Belongs to the protein kinase superfamily. CK1 Ser/Thr protein kinase family. Casein kinase I subfamily.</text>
</comment>
<comment type="sequence caution" evidence="8">
    <conflict type="miscellaneous discrepancy">
        <sequence resource="EMBL-CDS" id="AAB47968"/>
    </conflict>
    <text>Sequencing errors.</text>
</comment>
<comment type="sequence caution" evidence="8">
    <conflict type="miscellaneous discrepancy">
        <sequence resource="EMBL-CDS" id="AAY24537"/>
    </conflict>
    <text>Sequencing errors.</text>
</comment>
<keyword id="KW-0067">ATP-binding</keyword>
<keyword id="KW-0963">Cytoplasm</keyword>
<keyword id="KW-0418">Kinase</keyword>
<keyword id="KW-0547">Nucleotide-binding</keyword>
<keyword id="KW-0539">Nucleus</keyword>
<keyword id="KW-1185">Reference proteome</keyword>
<keyword id="KW-0723">Serine/threonine-protein kinase</keyword>
<keyword id="KW-0808">Transferase</keyword>
<name>CKL9_ARATH</name>
<proteinExistence type="evidence at protein level"/>
<protein>
    <recommendedName>
        <fullName evidence="8">Casein kinase 1-like protein 9</fullName>
        <ecNumber evidence="5">2.7.11.1</ecNumber>
    </recommendedName>
    <alternativeName>
        <fullName evidence="7">Dual specificity kinase 1</fullName>
    </alternativeName>
    <alternativeName>
        <fullName evidence="8">Protein CASEIN KINASE I-LIKE 9</fullName>
    </alternativeName>
    <alternativeName>
        <fullName evidence="6">Protein CASEIN KINASE I-LIKE 9 ALPHA</fullName>
    </alternativeName>
    <alternativeName>
        <fullName evidence="6">Protein CASEIN KINASE I-LIKE 9 BETA</fullName>
    </alternativeName>
</protein>